<feature type="chain" id="PRO_0000325150" description="Shikimate dehydrogenase (NADP(+))">
    <location>
        <begin position="1"/>
        <end position="285"/>
    </location>
</feature>
<feature type="active site" description="Proton acceptor" evidence="1">
    <location>
        <position position="70"/>
    </location>
</feature>
<feature type="binding site" evidence="1">
    <location>
        <begin position="19"/>
        <end position="21"/>
    </location>
    <ligand>
        <name>shikimate</name>
        <dbReference type="ChEBI" id="CHEBI:36208"/>
    </ligand>
</feature>
<feature type="binding site" evidence="1">
    <location>
        <position position="66"/>
    </location>
    <ligand>
        <name>shikimate</name>
        <dbReference type="ChEBI" id="CHEBI:36208"/>
    </ligand>
</feature>
<feature type="binding site" evidence="1">
    <location>
        <position position="91"/>
    </location>
    <ligand>
        <name>shikimate</name>
        <dbReference type="ChEBI" id="CHEBI:36208"/>
    </ligand>
</feature>
<feature type="binding site" evidence="1">
    <location>
        <position position="107"/>
    </location>
    <ligand>
        <name>shikimate</name>
        <dbReference type="ChEBI" id="CHEBI:36208"/>
    </ligand>
</feature>
<feature type="binding site" evidence="1">
    <location>
        <begin position="129"/>
        <end position="133"/>
    </location>
    <ligand>
        <name>NADP(+)</name>
        <dbReference type="ChEBI" id="CHEBI:58349"/>
    </ligand>
</feature>
<feature type="binding site" evidence="1">
    <location>
        <position position="228"/>
    </location>
    <ligand>
        <name>NADP(+)</name>
        <dbReference type="ChEBI" id="CHEBI:58349"/>
    </ligand>
</feature>
<feature type="binding site" evidence="1">
    <location>
        <position position="230"/>
    </location>
    <ligand>
        <name>shikimate</name>
        <dbReference type="ChEBI" id="CHEBI:36208"/>
    </ligand>
</feature>
<feature type="binding site" evidence="1">
    <location>
        <position position="251"/>
    </location>
    <ligand>
        <name>NADP(+)</name>
        <dbReference type="ChEBI" id="CHEBI:58349"/>
    </ligand>
</feature>
<organism>
    <name type="scientific">Prochlorococcus marinus subsp. pastoris (strain CCMP1986 / NIES-2087 / MED4)</name>
    <dbReference type="NCBI Taxonomy" id="59919"/>
    <lineage>
        <taxon>Bacteria</taxon>
        <taxon>Bacillati</taxon>
        <taxon>Cyanobacteriota</taxon>
        <taxon>Cyanophyceae</taxon>
        <taxon>Synechococcales</taxon>
        <taxon>Prochlorococcaceae</taxon>
        <taxon>Prochlorococcus</taxon>
    </lineage>
</organism>
<name>AROE_PROMP</name>
<comment type="function">
    <text evidence="1">Involved in the biosynthesis of the chorismate, which leads to the biosynthesis of aromatic amino acids. Catalyzes the reversible NADPH linked reduction of 3-dehydroshikimate (DHSA) to yield shikimate (SA).</text>
</comment>
<comment type="catalytic activity">
    <reaction evidence="1">
        <text>shikimate + NADP(+) = 3-dehydroshikimate + NADPH + H(+)</text>
        <dbReference type="Rhea" id="RHEA:17737"/>
        <dbReference type="ChEBI" id="CHEBI:15378"/>
        <dbReference type="ChEBI" id="CHEBI:16630"/>
        <dbReference type="ChEBI" id="CHEBI:36208"/>
        <dbReference type="ChEBI" id="CHEBI:57783"/>
        <dbReference type="ChEBI" id="CHEBI:58349"/>
        <dbReference type="EC" id="1.1.1.25"/>
    </reaction>
</comment>
<comment type="pathway">
    <text evidence="1">Metabolic intermediate biosynthesis; chorismate biosynthesis; chorismate from D-erythrose 4-phosphate and phosphoenolpyruvate: step 4/7.</text>
</comment>
<comment type="subunit">
    <text evidence="1">Homodimer.</text>
</comment>
<comment type="similarity">
    <text evidence="1">Belongs to the shikimate dehydrogenase family.</text>
</comment>
<protein>
    <recommendedName>
        <fullName evidence="1">Shikimate dehydrogenase (NADP(+))</fullName>
        <shortName evidence="1">SDH</shortName>
        <ecNumber evidence="1">1.1.1.25</ecNumber>
    </recommendedName>
</protein>
<gene>
    <name evidence="1" type="primary">aroE</name>
    <name type="ordered locus">PMM1705</name>
</gene>
<evidence type="ECO:0000255" key="1">
    <source>
        <dbReference type="HAMAP-Rule" id="MF_00222"/>
    </source>
</evidence>
<accession>Q7UZG2</accession>
<sequence length="285" mass="31657">MITSKTSFLALIGNPVSHSLSPIMQNAAIQYLGLDLIYMAIPCKNEDLEIVVNSIKKMNCKGLNITIPFKQKVFDMCSEISPVAKKVKAINTLKLNDNKNWIGTNTDIDGFIYPLKNLNLIKKSSLILGSGGAARSVIQGLIELKLSKITIISRKRNSLNELITNFKNDIEIKGLLSTNNEIKNLIQETDLIINTTPVGMSNTTNTDELPFGQGFWDSINSKTIVYDLIYNPSPTPFLKFCDKKGCMTIDGTQMLIAQGAKSLSFWTNGLEVPYEVMHDALKEYL</sequence>
<dbReference type="EC" id="1.1.1.25" evidence="1"/>
<dbReference type="EMBL" id="BX548174">
    <property type="protein sequence ID" value="CAE20164.1"/>
    <property type="molecule type" value="Genomic_DNA"/>
</dbReference>
<dbReference type="RefSeq" id="WP_011133332.1">
    <property type="nucleotide sequence ID" value="NC_005072.1"/>
</dbReference>
<dbReference type="SMR" id="Q7UZG2"/>
<dbReference type="STRING" id="59919.PMM1705"/>
<dbReference type="KEGG" id="pmm:PMM1705"/>
<dbReference type="eggNOG" id="COG0169">
    <property type="taxonomic scope" value="Bacteria"/>
</dbReference>
<dbReference type="HOGENOM" id="CLU_044063_4_1_3"/>
<dbReference type="OrthoDB" id="9792692at2"/>
<dbReference type="UniPathway" id="UPA00053">
    <property type="reaction ID" value="UER00087"/>
</dbReference>
<dbReference type="Proteomes" id="UP000001026">
    <property type="component" value="Chromosome"/>
</dbReference>
<dbReference type="GO" id="GO:0005829">
    <property type="term" value="C:cytosol"/>
    <property type="evidence" value="ECO:0007669"/>
    <property type="project" value="TreeGrafter"/>
</dbReference>
<dbReference type="GO" id="GO:0050661">
    <property type="term" value="F:NADP binding"/>
    <property type="evidence" value="ECO:0007669"/>
    <property type="project" value="InterPro"/>
</dbReference>
<dbReference type="GO" id="GO:0004764">
    <property type="term" value="F:shikimate 3-dehydrogenase (NADP+) activity"/>
    <property type="evidence" value="ECO:0007669"/>
    <property type="project" value="UniProtKB-UniRule"/>
</dbReference>
<dbReference type="GO" id="GO:0008652">
    <property type="term" value="P:amino acid biosynthetic process"/>
    <property type="evidence" value="ECO:0007669"/>
    <property type="project" value="UniProtKB-KW"/>
</dbReference>
<dbReference type="GO" id="GO:0009073">
    <property type="term" value="P:aromatic amino acid family biosynthetic process"/>
    <property type="evidence" value="ECO:0007669"/>
    <property type="project" value="UniProtKB-KW"/>
</dbReference>
<dbReference type="GO" id="GO:0009423">
    <property type="term" value="P:chorismate biosynthetic process"/>
    <property type="evidence" value="ECO:0007669"/>
    <property type="project" value="UniProtKB-UniRule"/>
</dbReference>
<dbReference type="GO" id="GO:0019632">
    <property type="term" value="P:shikimate metabolic process"/>
    <property type="evidence" value="ECO:0007669"/>
    <property type="project" value="InterPro"/>
</dbReference>
<dbReference type="CDD" id="cd01065">
    <property type="entry name" value="NAD_bind_Shikimate_DH"/>
    <property type="match status" value="1"/>
</dbReference>
<dbReference type="Gene3D" id="3.40.50.10860">
    <property type="entry name" value="Leucine Dehydrogenase, chain A, domain 1"/>
    <property type="match status" value="1"/>
</dbReference>
<dbReference type="Gene3D" id="3.40.50.720">
    <property type="entry name" value="NAD(P)-binding Rossmann-like Domain"/>
    <property type="match status" value="1"/>
</dbReference>
<dbReference type="HAMAP" id="MF_00222">
    <property type="entry name" value="Shikimate_DH_AroE"/>
    <property type="match status" value="1"/>
</dbReference>
<dbReference type="InterPro" id="IPR046346">
    <property type="entry name" value="Aminoacid_DH-like_N_sf"/>
</dbReference>
<dbReference type="InterPro" id="IPR036291">
    <property type="entry name" value="NAD(P)-bd_dom_sf"/>
</dbReference>
<dbReference type="InterPro" id="IPR041121">
    <property type="entry name" value="SDH_C"/>
</dbReference>
<dbReference type="InterPro" id="IPR011342">
    <property type="entry name" value="Shikimate_DH"/>
</dbReference>
<dbReference type="InterPro" id="IPR013708">
    <property type="entry name" value="Shikimate_DH-bd_N"/>
</dbReference>
<dbReference type="InterPro" id="IPR022893">
    <property type="entry name" value="Shikimate_DH_fam"/>
</dbReference>
<dbReference type="InterPro" id="IPR006151">
    <property type="entry name" value="Shikm_DH/Glu-tRNA_Rdtase"/>
</dbReference>
<dbReference type="NCBIfam" id="TIGR00507">
    <property type="entry name" value="aroE"/>
    <property type="match status" value="1"/>
</dbReference>
<dbReference type="NCBIfam" id="NF001314">
    <property type="entry name" value="PRK00258.2-2"/>
    <property type="match status" value="1"/>
</dbReference>
<dbReference type="PANTHER" id="PTHR21089:SF1">
    <property type="entry name" value="BIFUNCTIONAL 3-DEHYDROQUINATE DEHYDRATASE_SHIKIMATE DEHYDROGENASE, CHLOROPLASTIC"/>
    <property type="match status" value="1"/>
</dbReference>
<dbReference type="PANTHER" id="PTHR21089">
    <property type="entry name" value="SHIKIMATE DEHYDROGENASE"/>
    <property type="match status" value="1"/>
</dbReference>
<dbReference type="Pfam" id="PF18317">
    <property type="entry name" value="SDH_C"/>
    <property type="match status" value="1"/>
</dbReference>
<dbReference type="Pfam" id="PF01488">
    <property type="entry name" value="Shikimate_DH"/>
    <property type="match status" value="1"/>
</dbReference>
<dbReference type="Pfam" id="PF08501">
    <property type="entry name" value="Shikimate_dh_N"/>
    <property type="match status" value="1"/>
</dbReference>
<dbReference type="SUPFAM" id="SSF53223">
    <property type="entry name" value="Aminoacid dehydrogenase-like, N-terminal domain"/>
    <property type="match status" value="1"/>
</dbReference>
<dbReference type="SUPFAM" id="SSF51735">
    <property type="entry name" value="NAD(P)-binding Rossmann-fold domains"/>
    <property type="match status" value="1"/>
</dbReference>
<proteinExistence type="inferred from homology"/>
<reference key="1">
    <citation type="journal article" date="2003" name="Nature">
        <title>Genome divergence in two Prochlorococcus ecotypes reflects oceanic niche differentiation.</title>
        <authorList>
            <person name="Rocap G."/>
            <person name="Larimer F.W."/>
            <person name="Lamerdin J.E."/>
            <person name="Malfatti S."/>
            <person name="Chain P."/>
            <person name="Ahlgren N.A."/>
            <person name="Arellano A."/>
            <person name="Coleman M."/>
            <person name="Hauser L."/>
            <person name="Hess W.R."/>
            <person name="Johnson Z.I."/>
            <person name="Land M.L."/>
            <person name="Lindell D."/>
            <person name="Post A.F."/>
            <person name="Regala W."/>
            <person name="Shah M."/>
            <person name="Shaw S.L."/>
            <person name="Steglich C."/>
            <person name="Sullivan M.B."/>
            <person name="Ting C.S."/>
            <person name="Tolonen A."/>
            <person name="Webb E.A."/>
            <person name="Zinser E.R."/>
            <person name="Chisholm S.W."/>
        </authorList>
    </citation>
    <scope>NUCLEOTIDE SEQUENCE [LARGE SCALE GENOMIC DNA]</scope>
    <source>
        <strain>CCMP1986 / NIES-2087 / MED4</strain>
    </source>
</reference>
<keyword id="KW-0028">Amino-acid biosynthesis</keyword>
<keyword id="KW-0057">Aromatic amino acid biosynthesis</keyword>
<keyword id="KW-0521">NADP</keyword>
<keyword id="KW-0560">Oxidoreductase</keyword>